<organism>
    <name type="scientific">Salmonella enteritidis PT4 (strain P125109)</name>
    <dbReference type="NCBI Taxonomy" id="550537"/>
    <lineage>
        <taxon>Bacteria</taxon>
        <taxon>Pseudomonadati</taxon>
        <taxon>Pseudomonadota</taxon>
        <taxon>Gammaproteobacteria</taxon>
        <taxon>Enterobacterales</taxon>
        <taxon>Enterobacteriaceae</taxon>
        <taxon>Salmonella</taxon>
    </lineage>
</organism>
<comment type="catalytic activity">
    <reaction evidence="1">
        <text>sn-glycerol 3-phosphate + an acyl-CoA = a 1-acyl-sn-glycero-3-phosphate + CoA</text>
        <dbReference type="Rhea" id="RHEA:15325"/>
        <dbReference type="ChEBI" id="CHEBI:57287"/>
        <dbReference type="ChEBI" id="CHEBI:57597"/>
        <dbReference type="ChEBI" id="CHEBI:57970"/>
        <dbReference type="ChEBI" id="CHEBI:58342"/>
        <dbReference type="EC" id="2.3.1.15"/>
    </reaction>
</comment>
<comment type="pathway">
    <text evidence="1">Phospholipid metabolism; CDP-diacylglycerol biosynthesis; CDP-diacylglycerol from sn-glycerol 3-phosphate: step 1/3.</text>
</comment>
<comment type="subcellular location">
    <subcellularLocation>
        <location evidence="1">Cell inner membrane</location>
        <topology evidence="1">Peripheral membrane protein</topology>
        <orientation evidence="1">Cytoplasmic side</orientation>
    </subcellularLocation>
</comment>
<comment type="domain">
    <text evidence="1">The HXXXXD motif is essential for acyltransferase activity and may constitute the binding site for the phosphate moiety of the glycerol-3-phosphate.</text>
</comment>
<comment type="similarity">
    <text evidence="1">Belongs to the GPAT/DAPAT family.</text>
</comment>
<dbReference type="EC" id="2.3.1.15" evidence="1"/>
<dbReference type="EMBL" id="AM933172">
    <property type="protein sequence ID" value="CAR35568.1"/>
    <property type="molecule type" value="Genomic_DNA"/>
</dbReference>
<dbReference type="RefSeq" id="WP_000017360.1">
    <property type="nucleotide sequence ID" value="NC_011294.1"/>
</dbReference>
<dbReference type="SMR" id="B5QZ60"/>
<dbReference type="KEGG" id="set:SEN4004"/>
<dbReference type="HOGENOM" id="CLU_015407_0_0_6"/>
<dbReference type="UniPathway" id="UPA00557">
    <property type="reaction ID" value="UER00612"/>
</dbReference>
<dbReference type="Proteomes" id="UP000000613">
    <property type="component" value="Chromosome"/>
</dbReference>
<dbReference type="GO" id="GO:0005886">
    <property type="term" value="C:plasma membrane"/>
    <property type="evidence" value="ECO:0007669"/>
    <property type="project" value="UniProtKB-SubCell"/>
</dbReference>
<dbReference type="GO" id="GO:0004366">
    <property type="term" value="F:glycerol-3-phosphate O-acyltransferase activity"/>
    <property type="evidence" value="ECO:0007669"/>
    <property type="project" value="UniProtKB-UniRule"/>
</dbReference>
<dbReference type="GO" id="GO:0016024">
    <property type="term" value="P:CDP-diacylglycerol biosynthetic process"/>
    <property type="evidence" value="ECO:0007669"/>
    <property type="project" value="UniProtKB-UniRule"/>
</dbReference>
<dbReference type="GO" id="GO:0006631">
    <property type="term" value="P:fatty acid metabolic process"/>
    <property type="evidence" value="ECO:0007669"/>
    <property type="project" value="TreeGrafter"/>
</dbReference>
<dbReference type="CDD" id="cd07993">
    <property type="entry name" value="LPLAT_DHAPAT-like"/>
    <property type="match status" value="1"/>
</dbReference>
<dbReference type="HAMAP" id="MF_00393">
    <property type="entry name" value="Glyc3P_acyltrans"/>
    <property type="match status" value="1"/>
</dbReference>
<dbReference type="InterPro" id="IPR022284">
    <property type="entry name" value="GPAT/DHAPAT"/>
</dbReference>
<dbReference type="InterPro" id="IPR045520">
    <property type="entry name" value="GPAT/DHAPAT_C"/>
</dbReference>
<dbReference type="InterPro" id="IPR041728">
    <property type="entry name" value="GPAT/DHAPAT_LPLAT"/>
</dbReference>
<dbReference type="InterPro" id="IPR028354">
    <property type="entry name" value="GPAT_PlsB"/>
</dbReference>
<dbReference type="InterPro" id="IPR002123">
    <property type="entry name" value="Plipid/glycerol_acylTrfase"/>
</dbReference>
<dbReference type="NCBIfam" id="TIGR03703">
    <property type="entry name" value="plsB"/>
    <property type="match status" value="1"/>
</dbReference>
<dbReference type="NCBIfam" id="NF003441">
    <property type="entry name" value="PRK04974.1"/>
    <property type="match status" value="1"/>
</dbReference>
<dbReference type="PANTHER" id="PTHR12563:SF17">
    <property type="entry name" value="DIHYDROXYACETONE PHOSPHATE ACYLTRANSFERASE"/>
    <property type="match status" value="1"/>
</dbReference>
<dbReference type="PANTHER" id="PTHR12563">
    <property type="entry name" value="GLYCEROL-3-PHOSPHATE ACYLTRANSFERASE"/>
    <property type="match status" value="1"/>
</dbReference>
<dbReference type="Pfam" id="PF01553">
    <property type="entry name" value="Acyltransferase"/>
    <property type="match status" value="1"/>
</dbReference>
<dbReference type="Pfam" id="PF19277">
    <property type="entry name" value="GPAT_C"/>
    <property type="match status" value="1"/>
</dbReference>
<dbReference type="PIRSF" id="PIRSF500064">
    <property type="entry name" value="GPAT"/>
    <property type="match status" value="1"/>
</dbReference>
<dbReference type="PIRSF" id="PIRSF000437">
    <property type="entry name" value="GPAT_DHAPAT"/>
    <property type="match status" value="1"/>
</dbReference>
<dbReference type="SMART" id="SM00563">
    <property type="entry name" value="PlsC"/>
    <property type="match status" value="1"/>
</dbReference>
<dbReference type="SUPFAM" id="SSF69593">
    <property type="entry name" value="Glycerol-3-phosphate (1)-acyltransferase"/>
    <property type="match status" value="1"/>
</dbReference>
<protein>
    <recommendedName>
        <fullName evidence="1">Glycerol-3-phosphate acyltransferase</fullName>
        <shortName evidence="1">GPAT</shortName>
        <ecNumber evidence="1">2.3.1.15</ecNumber>
    </recommendedName>
</protein>
<sequence length="806" mass="91227">MSGWPRIYYKLLNLPLSILVKSKSIPAEPAQELGLDTSRPIMYVLPYNSKADLLTLRAQCLAHDLPDPLEPLEIDGALLPRYVFIHGGPRVFTYYTPKEESVKLFHDYLDLHRSNPALDVQMVPVSVMFGRAPGREKGEDNPPLRMLNGVQKFFAISWLGRDSFVRFSPSVSLRRMADEHGTDKIIAQKLARVARMHFARQRLAAVGPRLPARQDLFNKLLASKAIARAVEDEARSKKISHEKAQQNAIALMEEIAANFSYEMIRLTDRILGFTWNRLYQGINVHNAERVRQLAHDGHEIVYVPCHRSHMDYLLLSYVLYHQGLVPPHIAAGINLNFWPAGPIFRRLGAFFIRRTFKGNKLYSTVFREYLGELFSRGYSVEYFVEGGRSRTGRLLDPKTGTLSMTIQAMLRGGTRPITLVPIYIGYEHVMEVGTYAKELRGATKEKESLPQMLKGLSKLRNLGQGYVNFGEPMPLMTYLNQHVPEWRESIDPIEAIRPAWLTPTVNSIAADLMVRINNAGAANAMNLCCTALLASRQRSLTREQLTEQLDCYLDLMRNVPYSTDSTVPAASAGELIAHALQMNKFEVEKDTIGDIIILPREQAVLMTYYRNNIAHMLIMPSLMAAIITQHRRISRDALQQHVEALYPMLKAELFLRWEREELASVIDALASEMQRQGLITLQDDELHINPTHSRTLQLLAAGARETLQRYAITFWLLSANPSINRSTLEKESRTVAQRLSVLHGINAPEFFDKAVFSSLVLTLRDEGYISDTGDAEPAETMKIYQMLADLITSDVRLTIESATQGE</sequence>
<gene>
    <name evidence="1" type="primary">plsB</name>
    <name type="ordered locus">SEN4004</name>
</gene>
<proteinExistence type="inferred from homology"/>
<evidence type="ECO:0000255" key="1">
    <source>
        <dbReference type="HAMAP-Rule" id="MF_00393"/>
    </source>
</evidence>
<keyword id="KW-0012">Acyltransferase</keyword>
<keyword id="KW-0997">Cell inner membrane</keyword>
<keyword id="KW-1003">Cell membrane</keyword>
<keyword id="KW-0444">Lipid biosynthesis</keyword>
<keyword id="KW-0443">Lipid metabolism</keyword>
<keyword id="KW-0472">Membrane</keyword>
<keyword id="KW-0594">Phospholipid biosynthesis</keyword>
<keyword id="KW-1208">Phospholipid metabolism</keyword>
<keyword id="KW-0808">Transferase</keyword>
<reference key="1">
    <citation type="journal article" date="2008" name="Genome Res.">
        <title>Comparative genome analysis of Salmonella enteritidis PT4 and Salmonella gallinarum 287/91 provides insights into evolutionary and host adaptation pathways.</title>
        <authorList>
            <person name="Thomson N.R."/>
            <person name="Clayton D.J."/>
            <person name="Windhorst D."/>
            <person name="Vernikos G."/>
            <person name="Davidson S."/>
            <person name="Churcher C."/>
            <person name="Quail M.A."/>
            <person name="Stevens M."/>
            <person name="Jones M.A."/>
            <person name="Watson M."/>
            <person name="Barron A."/>
            <person name="Layton A."/>
            <person name="Pickard D."/>
            <person name="Kingsley R.A."/>
            <person name="Bignell A."/>
            <person name="Clark L."/>
            <person name="Harris B."/>
            <person name="Ormond D."/>
            <person name="Abdellah Z."/>
            <person name="Brooks K."/>
            <person name="Cherevach I."/>
            <person name="Chillingworth T."/>
            <person name="Woodward J."/>
            <person name="Norberczak H."/>
            <person name="Lord A."/>
            <person name="Arrowsmith C."/>
            <person name="Jagels K."/>
            <person name="Moule S."/>
            <person name="Mungall K."/>
            <person name="Saunders M."/>
            <person name="Whitehead S."/>
            <person name="Chabalgoity J.A."/>
            <person name="Maskell D."/>
            <person name="Humphreys T."/>
            <person name="Roberts M."/>
            <person name="Barrow P.A."/>
            <person name="Dougan G."/>
            <person name="Parkhill J."/>
        </authorList>
    </citation>
    <scope>NUCLEOTIDE SEQUENCE [LARGE SCALE GENOMIC DNA]</scope>
    <source>
        <strain>P125109</strain>
    </source>
</reference>
<name>PLSB_SALEP</name>
<accession>B5QZ60</accession>
<feature type="chain" id="PRO_1000123091" description="Glycerol-3-phosphate acyltransferase">
    <location>
        <begin position="1"/>
        <end position="806"/>
    </location>
</feature>
<feature type="short sequence motif" description="HXXXXD motif">
    <location>
        <begin position="305"/>
        <end position="310"/>
    </location>
</feature>